<sequence length="209" mass="23660">MARYCGPKNRIARRFGANIFGRGRNPLLRKPNPPGQHGMQRKKKSDYGLQLEEKQKLKACYGMILEKQLVKAYKEVVNKQGNVAQMFLEKFECRLDSIVYRLGFAKTIFAAQQLVSHGHVLVNGKKVDRRSFFVRPGMQISLKEKSKRLAIVTESLENKDQSSLPAYLSLDKAAFKGELVVAPELDQIASQLPLPVNVSVICEFLSHRT</sequence>
<evidence type="ECO:0000255" key="1">
    <source>
        <dbReference type="HAMAP-Rule" id="MF_01306"/>
    </source>
</evidence>
<evidence type="ECO:0000256" key="2">
    <source>
        <dbReference type="SAM" id="MobiDB-lite"/>
    </source>
</evidence>
<evidence type="ECO:0000305" key="3"/>
<gene>
    <name evidence="1" type="primary">rpsD</name>
    <name type="ordered locus">CTLon_0884</name>
</gene>
<protein>
    <recommendedName>
        <fullName evidence="1">Small ribosomal subunit protein uS4</fullName>
    </recommendedName>
    <alternativeName>
        <fullName evidence="3">30S ribosomal protein S4</fullName>
    </alternativeName>
</protein>
<reference key="1">
    <citation type="journal article" date="2008" name="Genome Res.">
        <title>Chlamydia trachomatis: genome sequence analysis of lymphogranuloma venereum isolates.</title>
        <authorList>
            <person name="Thomson N.R."/>
            <person name="Holden M.T.G."/>
            <person name="Carder C."/>
            <person name="Lennard N."/>
            <person name="Lockey S.J."/>
            <person name="Marsh P."/>
            <person name="Skipp P."/>
            <person name="O'Connor C.D."/>
            <person name="Goodhead I."/>
            <person name="Norbertzcak H."/>
            <person name="Harris B."/>
            <person name="Ormond D."/>
            <person name="Rance R."/>
            <person name="Quail M.A."/>
            <person name="Parkhill J."/>
            <person name="Stephens R.S."/>
            <person name="Clarke I.N."/>
        </authorList>
    </citation>
    <scope>NUCLEOTIDE SEQUENCE [LARGE SCALE GENOMIC DNA]</scope>
    <source>
        <strain>UCH-1/proctitis</strain>
    </source>
</reference>
<comment type="function">
    <text evidence="1">One of the primary rRNA binding proteins, it binds directly to 16S rRNA where it nucleates assembly of the body of the 30S subunit.</text>
</comment>
<comment type="function">
    <text evidence="1">With S5 and S12 plays an important role in translational accuracy.</text>
</comment>
<comment type="subunit">
    <text evidence="1">Part of the 30S ribosomal subunit. Contacts protein S5. The interaction surface between S4 and S5 is involved in control of translational fidelity.</text>
</comment>
<comment type="similarity">
    <text evidence="1">Belongs to the universal ribosomal protein uS4 family.</text>
</comment>
<dbReference type="EMBL" id="AM884177">
    <property type="protein sequence ID" value="CAP07281.1"/>
    <property type="molecule type" value="Genomic_DNA"/>
</dbReference>
<dbReference type="RefSeq" id="WP_009873958.1">
    <property type="nucleotide sequence ID" value="NC_010280.2"/>
</dbReference>
<dbReference type="SMR" id="B0BA80"/>
<dbReference type="KEGG" id="ctl:CTLon_0884"/>
<dbReference type="HOGENOM" id="CLU_092403_0_1_0"/>
<dbReference type="Proteomes" id="UP001154401">
    <property type="component" value="Chromosome"/>
</dbReference>
<dbReference type="GO" id="GO:0015935">
    <property type="term" value="C:small ribosomal subunit"/>
    <property type="evidence" value="ECO:0007669"/>
    <property type="project" value="InterPro"/>
</dbReference>
<dbReference type="GO" id="GO:0019843">
    <property type="term" value="F:rRNA binding"/>
    <property type="evidence" value="ECO:0007669"/>
    <property type="project" value="UniProtKB-UniRule"/>
</dbReference>
<dbReference type="GO" id="GO:0003735">
    <property type="term" value="F:structural constituent of ribosome"/>
    <property type="evidence" value="ECO:0007669"/>
    <property type="project" value="InterPro"/>
</dbReference>
<dbReference type="GO" id="GO:0042274">
    <property type="term" value="P:ribosomal small subunit biogenesis"/>
    <property type="evidence" value="ECO:0007669"/>
    <property type="project" value="TreeGrafter"/>
</dbReference>
<dbReference type="GO" id="GO:0006412">
    <property type="term" value="P:translation"/>
    <property type="evidence" value="ECO:0007669"/>
    <property type="project" value="UniProtKB-UniRule"/>
</dbReference>
<dbReference type="CDD" id="cd00165">
    <property type="entry name" value="S4"/>
    <property type="match status" value="1"/>
</dbReference>
<dbReference type="FunFam" id="3.10.290.10:FF:000001">
    <property type="entry name" value="30S ribosomal protein S4"/>
    <property type="match status" value="1"/>
</dbReference>
<dbReference type="Gene3D" id="1.10.1050.10">
    <property type="entry name" value="Ribosomal Protein S4 Delta 41, Chain A, domain 1"/>
    <property type="match status" value="1"/>
</dbReference>
<dbReference type="Gene3D" id="3.10.290.10">
    <property type="entry name" value="RNA-binding S4 domain"/>
    <property type="match status" value="1"/>
</dbReference>
<dbReference type="HAMAP" id="MF_01306_B">
    <property type="entry name" value="Ribosomal_uS4_B"/>
    <property type="match status" value="1"/>
</dbReference>
<dbReference type="InterPro" id="IPR022801">
    <property type="entry name" value="Ribosomal_uS4"/>
</dbReference>
<dbReference type="InterPro" id="IPR005709">
    <property type="entry name" value="Ribosomal_uS4_bac-type"/>
</dbReference>
<dbReference type="InterPro" id="IPR001912">
    <property type="entry name" value="Ribosomal_uS4_N"/>
</dbReference>
<dbReference type="InterPro" id="IPR002942">
    <property type="entry name" value="S4_RNA-bd"/>
</dbReference>
<dbReference type="InterPro" id="IPR036986">
    <property type="entry name" value="S4_RNA-bd_sf"/>
</dbReference>
<dbReference type="NCBIfam" id="NF003717">
    <property type="entry name" value="PRK05327.1"/>
    <property type="match status" value="1"/>
</dbReference>
<dbReference type="NCBIfam" id="TIGR01017">
    <property type="entry name" value="rpsD_bact"/>
    <property type="match status" value="1"/>
</dbReference>
<dbReference type="PANTHER" id="PTHR11831">
    <property type="entry name" value="30S 40S RIBOSOMAL PROTEIN"/>
    <property type="match status" value="1"/>
</dbReference>
<dbReference type="PANTHER" id="PTHR11831:SF4">
    <property type="entry name" value="SMALL RIBOSOMAL SUBUNIT PROTEIN US4M"/>
    <property type="match status" value="1"/>
</dbReference>
<dbReference type="Pfam" id="PF00163">
    <property type="entry name" value="Ribosomal_S4"/>
    <property type="match status" value="1"/>
</dbReference>
<dbReference type="Pfam" id="PF01479">
    <property type="entry name" value="S4"/>
    <property type="match status" value="1"/>
</dbReference>
<dbReference type="SMART" id="SM01390">
    <property type="entry name" value="Ribosomal_S4"/>
    <property type="match status" value="1"/>
</dbReference>
<dbReference type="SMART" id="SM00363">
    <property type="entry name" value="S4"/>
    <property type="match status" value="1"/>
</dbReference>
<dbReference type="SUPFAM" id="SSF55174">
    <property type="entry name" value="Alpha-L RNA-binding motif"/>
    <property type="match status" value="1"/>
</dbReference>
<dbReference type="PROSITE" id="PS50889">
    <property type="entry name" value="S4"/>
    <property type="match status" value="1"/>
</dbReference>
<accession>B0BA80</accession>
<organism>
    <name type="scientific">Chlamydia trachomatis serovar L2b (strain UCH-1/proctitis)</name>
    <dbReference type="NCBI Taxonomy" id="471473"/>
    <lineage>
        <taxon>Bacteria</taxon>
        <taxon>Pseudomonadati</taxon>
        <taxon>Chlamydiota</taxon>
        <taxon>Chlamydiia</taxon>
        <taxon>Chlamydiales</taxon>
        <taxon>Chlamydiaceae</taxon>
        <taxon>Chlamydia/Chlamydophila group</taxon>
        <taxon>Chlamydia</taxon>
    </lineage>
</organism>
<name>RS4_CHLTB</name>
<keyword id="KW-0687">Ribonucleoprotein</keyword>
<keyword id="KW-0689">Ribosomal protein</keyword>
<keyword id="KW-0694">RNA-binding</keyword>
<keyword id="KW-0699">rRNA-binding</keyword>
<feature type="chain" id="PRO_1000140708" description="Small ribosomal subunit protein uS4">
    <location>
        <begin position="1"/>
        <end position="209"/>
    </location>
</feature>
<feature type="domain" description="S4 RNA-binding" evidence="1">
    <location>
        <begin position="93"/>
        <end position="154"/>
    </location>
</feature>
<feature type="region of interest" description="Disordered" evidence="2">
    <location>
        <begin position="22"/>
        <end position="45"/>
    </location>
</feature>
<proteinExistence type="inferred from homology"/>